<name>TRMFO_SYNJA</name>
<proteinExistence type="inferred from homology"/>
<sequence length="451" mass="49177">MPHSMSRAETLAPIHVVGGGLAGTEAAWQIAQLGVPVILSEMRPVRQSPAHHTDQLGELVCSNSFGALASDRAAGLLKEELRQLGSLVIATADRHAVPAGGALAVDRARFSQALTEAIANHPLITLRREEVTGIPEGIAVLCTGPLTSEPLAKALQAFTGLEYLSFFDASSPIVTGDSLNRAVVFQASRYDKGEAAYLNCPMTEAEYERFCQALVEAEQVPLKDFEKEERKFFEGCLPIEEMARRGKDTLRFGPLKPVGLVDPRTGSRPYAVVQLRQEDRAGKLWNLVGFQTNLKWGEQQRVFRLIPGLEAAEFVRFGVMHRNTFLNSPQLLLPTLQFRRRPTLLAAGQLVGTEGYACAVAGGWLAGQNAARLALGLPLITLPPETMMGSLFQFISSADPKHFQPMPANFGLLPELEGQKVRSKQERYARYRDRALAALAATGLVRQAQTA</sequence>
<evidence type="ECO:0000255" key="1">
    <source>
        <dbReference type="HAMAP-Rule" id="MF_01037"/>
    </source>
</evidence>
<organism>
    <name type="scientific">Synechococcus sp. (strain JA-3-3Ab)</name>
    <name type="common">Cyanobacteria bacterium Yellowstone A-Prime</name>
    <dbReference type="NCBI Taxonomy" id="321327"/>
    <lineage>
        <taxon>Bacteria</taxon>
        <taxon>Bacillati</taxon>
        <taxon>Cyanobacteriota</taxon>
        <taxon>Cyanophyceae</taxon>
        <taxon>Synechococcales</taxon>
        <taxon>Synechococcaceae</taxon>
        <taxon>Synechococcus</taxon>
    </lineage>
</organism>
<accession>Q2JRF7</accession>
<dbReference type="EC" id="2.1.1.74" evidence="1"/>
<dbReference type="EMBL" id="CP000239">
    <property type="protein sequence ID" value="ABD00797.1"/>
    <property type="molecule type" value="Genomic_DNA"/>
</dbReference>
<dbReference type="RefSeq" id="WP_011431468.1">
    <property type="nucleotide sequence ID" value="NC_007775.1"/>
</dbReference>
<dbReference type="SMR" id="Q2JRF7"/>
<dbReference type="STRING" id="321327.CYA_2686"/>
<dbReference type="KEGG" id="cya:CYA_2686"/>
<dbReference type="eggNOG" id="COG1206">
    <property type="taxonomic scope" value="Bacteria"/>
</dbReference>
<dbReference type="HOGENOM" id="CLU_033057_1_0_3"/>
<dbReference type="OrthoDB" id="9803114at2"/>
<dbReference type="Proteomes" id="UP000008818">
    <property type="component" value="Chromosome"/>
</dbReference>
<dbReference type="GO" id="GO:0005829">
    <property type="term" value="C:cytosol"/>
    <property type="evidence" value="ECO:0007669"/>
    <property type="project" value="TreeGrafter"/>
</dbReference>
<dbReference type="GO" id="GO:0050660">
    <property type="term" value="F:flavin adenine dinucleotide binding"/>
    <property type="evidence" value="ECO:0007669"/>
    <property type="project" value="UniProtKB-UniRule"/>
</dbReference>
<dbReference type="GO" id="GO:0047151">
    <property type="term" value="F:tRNA (uracil(54)-C5)-methyltransferase activity, 5,10-methylenetetrahydrofolate-dependent"/>
    <property type="evidence" value="ECO:0007669"/>
    <property type="project" value="UniProtKB-UniRule"/>
</dbReference>
<dbReference type="GO" id="GO:0030488">
    <property type="term" value="P:tRNA methylation"/>
    <property type="evidence" value="ECO:0007669"/>
    <property type="project" value="TreeGrafter"/>
</dbReference>
<dbReference type="GO" id="GO:0002098">
    <property type="term" value="P:tRNA wobble uridine modification"/>
    <property type="evidence" value="ECO:0007669"/>
    <property type="project" value="TreeGrafter"/>
</dbReference>
<dbReference type="Gene3D" id="3.50.50.60">
    <property type="entry name" value="FAD/NAD(P)-binding domain"/>
    <property type="match status" value="2"/>
</dbReference>
<dbReference type="HAMAP" id="MF_01037">
    <property type="entry name" value="TrmFO"/>
    <property type="match status" value="1"/>
</dbReference>
<dbReference type="InterPro" id="IPR036188">
    <property type="entry name" value="FAD/NAD-bd_sf"/>
</dbReference>
<dbReference type="InterPro" id="IPR002218">
    <property type="entry name" value="MnmG-rel"/>
</dbReference>
<dbReference type="InterPro" id="IPR040131">
    <property type="entry name" value="MnmG_N"/>
</dbReference>
<dbReference type="InterPro" id="IPR004417">
    <property type="entry name" value="TrmFO"/>
</dbReference>
<dbReference type="NCBIfam" id="TIGR00137">
    <property type="entry name" value="gid_trmFO"/>
    <property type="match status" value="1"/>
</dbReference>
<dbReference type="NCBIfam" id="NF003739">
    <property type="entry name" value="PRK05335.1"/>
    <property type="match status" value="1"/>
</dbReference>
<dbReference type="PANTHER" id="PTHR11806">
    <property type="entry name" value="GLUCOSE INHIBITED DIVISION PROTEIN A"/>
    <property type="match status" value="1"/>
</dbReference>
<dbReference type="PANTHER" id="PTHR11806:SF2">
    <property type="entry name" value="METHYLENETETRAHYDROFOLATE--TRNA-(URACIL-5-)-METHYLTRANSFERASE TRMFO"/>
    <property type="match status" value="1"/>
</dbReference>
<dbReference type="Pfam" id="PF01134">
    <property type="entry name" value="GIDA"/>
    <property type="match status" value="1"/>
</dbReference>
<dbReference type="SUPFAM" id="SSF51905">
    <property type="entry name" value="FAD/NAD(P)-binding domain"/>
    <property type="match status" value="1"/>
</dbReference>
<protein>
    <recommendedName>
        <fullName evidence="1">Methylenetetrahydrofolate--tRNA-(uracil-5-)-methyltransferase TrmFO</fullName>
        <ecNumber evidence="1">2.1.1.74</ecNumber>
    </recommendedName>
    <alternativeName>
        <fullName evidence="1">Folate-dependent tRNA (uracil-5-)-methyltransferase</fullName>
    </alternativeName>
    <alternativeName>
        <fullName evidence="1">Folate-dependent tRNA(M-5-U54)-methyltransferase</fullName>
    </alternativeName>
</protein>
<feature type="chain" id="PRO_0000346409" description="Methylenetetrahydrofolate--tRNA-(uracil-5-)-methyltransferase TrmFO">
    <location>
        <begin position="1"/>
        <end position="451"/>
    </location>
</feature>
<feature type="binding site" evidence="1">
    <location>
        <begin position="18"/>
        <end position="23"/>
    </location>
    <ligand>
        <name>FAD</name>
        <dbReference type="ChEBI" id="CHEBI:57692"/>
    </ligand>
</feature>
<keyword id="KW-0963">Cytoplasm</keyword>
<keyword id="KW-0274">FAD</keyword>
<keyword id="KW-0285">Flavoprotein</keyword>
<keyword id="KW-0489">Methyltransferase</keyword>
<keyword id="KW-0520">NAD</keyword>
<keyword id="KW-0521">NADP</keyword>
<keyword id="KW-0808">Transferase</keyword>
<keyword id="KW-0819">tRNA processing</keyword>
<gene>
    <name evidence="1" type="primary">trmFO</name>
    <name type="ordered locus">CYA_2686</name>
</gene>
<comment type="function">
    <text evidence="1">Catalyzes the folate-dependent formation of 5-methyl-uridine at position 54 (M-5-U54) in all tRNAs.</text>
</comment>
<comment type="catalytic activity">
    <reaction evidence="1">
        <text>uridine(54) in tRNA + (6R)-5,10-methylene-5,6,7,8-tetrahydrofolate + NADH + H(+) = 5-methyluridine(54) in tRNA + (6S)-5,6,7,8-tetrahydrofolate + NAD(+)</text>
        <dbReference type="Rhea" id="RHEA:16873"/>
        <dbReference type="Rhea" id="RHEA-COMP:10167"/>
        <dbReference type="Rhea" id="RHEA-COMP:10193"/>
        <dbReference type="ChEBI" id="CHEBI:15378"/>
        <dbReference type="ChEBI" id="CHEBI:15636"/>
        <dbReference type="ChEBI" id="CHEBI:57453"/>
        <dbReference type="ChEBI" id="CHEBI:57540"/>
        <dbReference type="ChEBI" id="CHEBI:57945"/>
        <dbReference type="ChEBI" id="CHEBI:65315"/>
        <dbReference type="ChEBI" id="CHEBI:74447"/>
        <dbReference type="EC" id="2.1.1.74"/>
    </reaction>
</comment>
<comment type="catalytic activity">
    <reaction evidence="1">
        <text>uridine(54) in tRNA + (6R)-5,10-methylene-5,6,7,8-tetrahydrofolate + NADPH + H(+) = 5-methyluridine(54) in tRNA + (6S)-5,6,7,8-tetrahydrofolate + NADP(+)</text>
        <dbReference type="Rhea" id="RHEA:62372"/>
        <dbReference type="Rhea" id="RHEA-COMP:10167"/>
        <dbReference type="Rhea" id="RHEA-COMP:10193"/>
        <dbReference type="ChEBI" id="CHEBI:15378"/>
        <dbReference type="ChEBI" id="CHEBI:15636"/>
        <dbReference type="ChEBI" id="CHEBI:57453"/>
        <dbReference type="ChEBI" id="CHEBI:57783"/>
        <dbReference type="ChEBI" id="CHEBI:58349"/>
        <dbReference type="ChEBI" id="CHEBI:65315"/>
        <dbReference type="ChEBI" id="CHEBI:74447"/>
        <dbReference type="EC" id="2.1.1.74"/>
    </reaction>
</comment>
<comment type="cofactor">
    <cofactor evidence="1">
        <name>FAD</name>
        <dbReference type="ChEBI" id="CHEBI:57692"/>
    </cofactor>
</comment>
<comment type="subcellular location">
    <subcellularLocation>
        <location evidence="1">Cytoplasm</location>
    </subcellularLocation>
</comment>
<comment type="similarity">
    <text evidence="1">Belongs to the MnmG family. TrmFO subfamily.</text>
</comment>
<reference key="1">
    <citation type="journal article" date="2007" name="ISME J.">
        <title>Population level functional diversity in a microbial community revealed by comparative genomic and metagenomic analyses.</title>
        <authorList>
            <person name="Bhaya D."/>
            <person name="Grossman A.R."/>
            <person name="Steunou A.-S."/>
            <person name="Khuri N."/>
            <person name="Cohan F.M."/>
            <person name="Hamamura N."/>
            <person name="Melendrez M.C."/>
            <person name="Bateson M.M."/>
            <person name="Ward D.M."/>
            <person name="Heidelberg J.F."/>
        </authorList>
    </citation>
    <scope>NUCLEOTIDE SEQUENCE [LARGE SCALE GENOMIC DNA]</scope>
    <source>
        <strain>JA-3-3Ab</strain>
    </source>
</reference>